<sequence length="393" mass="44519">MNSSCKSRVFNIISIIMVSMLILSLGAFANNNKAKADSHSKQLEINVKSDKVPQKVKDLAQQQFAGYAKALDKQSNAKTGKYELGEAFKIYKFNGEEDNSYYYPVIKDGKIVYTLTLSPKNKDDLNKSKEDMNYSVKISNFIAKDLDQIKDKNSNITVLTDEKGFYFEEDGKVRLVKATPLPGNVKEKESAKTVSAKLKQELKNTVTPTKVEENEAIQEDQVQYENTLKNFKIREQQFDNSWCAGFSMAALLNATKNTDTYNAHDIMRTLYPEVSEQDLPNCATFPNQMIEYGKSQGRDIHYQEGVPSYEQVDQLTKDNVGIMILAQSVSQNPNDPHLGHALAVVGNAKINDQEKLIYWNPWDTELSIQDADSSLLHLSFNRDYNWYGSMIGY</sequence>
<evidence type="ECO:0000250" key="1"/>
<evidence type="ECO:0000250" key="2">
    <source>
        <dbReference type="UniProtKB" id="P0C1S6"/>
    </source>
</evidence>
<evidence type="ECO:0000255" key="3">
    <source>
        <dbReference type="PROSITE-ProRule" id="PRU10089"/>
    </source>
</evidence>
<evidence type="ECO:0000305" key="4"/>
<feature type="signal peptide" evidence="1">
    <location>
        <begin position="1"/>
        <end position="36"/>
    </location>
</feature>
<feature type="propeptide" id="PRO_0000026561" evidence="1">
    <location>
        <begin position="37"/>
        <end position="219"/>
    </location>
</feature>
<feature type="chain" id="PRO_0000026562" description="Staphopain B">
    <location>
        <begin position="220"/>
        <end position="393"/>
    </location>
</feature>
<feature type="active site" evidence="3">
    <location>
        <position position="243"/>
    </location>
</feature>
<feature type="active site" evidence="3">
    <location>
        <position position="340"/>
    </location>
</feature>
<feature type="active site" evidence="3">
    <location>
        <position position="360"/>
    </location>
</feature>
<feature type="site" description="Cleavage; by SspA" evidence="1">
    <location>
        <begin position="219"/>
        <end position="220"/>
    </location>
</feature>
<dbReference type="EC" id="3.4.22.-"/>
<dbReference type="EMBL" id="CP000046">
    <property type="protein sequence ID" value="AAW36521.1"/>
    <property type="molecule type" value="Genomic_DNA"/>
</dbReference>
<dbReference type="RefSeq" id="WP_001088780.1">
    <property type="nucleotide sequence ID" value="NZ_JBGOFO010000002.1"/>
</dbReference>
<dbReference type="SMR" id="Q5HH36"/>
<dbReference type="MEROPS" id="C47.002"/>
<dbReference type="KEGG" id="sac:SACOL1056"/>
<dbReference type="HOGENOM" id="CLU_069043_0_0_9"/>
<dbReference type="PRO" id="PR:Q5HH36"/>
<dbReference type="Proteomes" id="UP000000530">
    <property type="component" value="Chromosome"/>
</dbReference>
<dbReference type="GO" id="GO:0005576">
    <property type="term" value="C:extracellular region"/>
    <property type="evidence" value="ECO:0007669"/>
    <property type="project" value="UniProtKB-SubCell"/>
</dbReference>
<dbReference type="GO" id="GO:0008234">
    <property type="term" value="F:cysteine-type peptidase activity"/>
    <property type="evidence" value="ECO:0007669"/>
    <property type="project" value="UniProtKB-KW"/>
</dbReference>
<dbReference type="GO" id="GO:0006508">
    <property type="term" value="P:proteolysis"/>
    <property type="evidence" value="ECO:0007669"/>
    <property type="project" value="UniProtKB-KW"/>
</dbReference>
<dbReference type="Gene3D" id="3.90.70.10">
    <property type="entry name" value="Cysteine proteinases"/>
    <property type="match status" value="1"/>
</dbReference>
<dbReference type="Gene3D" id="3.10.500.10">
    <property type="entry name" value="Staphopain proregion domain"/>
    <property type="match status" value="1"/>
</dbReference>
<dbReference type="InterPro" id="IPR046350">
    <property type="entry name" value="Cystatin_sf"/>
</dbReference>
<dbReference type="InterPro" id="IPR038765">
    <property type="entry name" value="Papain-like_cys_pep_sf"/>
</dbReference>
<dbReference type="InterPro" id="IPR025660">
    <property type="entry name" value="Pept_his_AS"/>
</dbReference>
<dbReference type="InterPro" id="IPR008750">
    <property type="entry name" value="Peptidase_C47"/>
</dbReference>
<dbReference type="InterPro" id="IPR028076">
    <property type="entry name" value="Staphopain_pro"/>
</dbReference>
<dbReference type="InterPro" id="IPR037155">
    <property type="entry name" value="Staphopain_pro_sf"/>
</dbReference>
<dbReference type="Pfam" id="PF05543">
    <property type="entry name" value="Peptidase_C47"/>
    <property type="match status" value="1"/>
</dbReference>
<dbReference type="Pfam" id="PF14731">
    <property type="entry name" value="Staphopain_pro"/>
    <property type="match status" value="1"/>
</dbReference>
<dbReference type="SUPFAM" id="SSF54403">
    <property type="entry name" value="Cystatin/monellin"/>
    <property type="match status" value="1"/>
</dbReference>
<dbReference type="SUPFAM" id="SSF54001">
    <property type="entry name" value="Cysteine proteinases"/>
    <property type="match status" value="1"/>
</dbReference>
<dbReference type="PROSITE" id="PS00639">
    <property type="entry name" value="THIOL_PROTEASE_HIS"/>
    <property type="match status" value="1"/>
</dbReference>
<gene>
    <name type="primary">sspB</name>
    <name type="ordered locus">SACOL1056</name>
</gene>
<accession>Q5HH36</accession>
<name>SSPB_STAAC</name>
<proteinExistence type="inferred from homology"/>
<organism>
    <name type="scientific">Staphylococcus aureus (strain COL)</name>
    <dbReference type="NCBI Taxonomy" id="93062"/>
    <lineage>
        <taxon>Bacteria</taxon>
        <taxon>Bacillati</taxon>
        <taxon>Bacillota</taxon>
        <taxon>Bacilli</taxon>
        <taxon>Bacillales</taxon>
        <taxon>Staphylococcaceae</taxon>
        <taxon>Staphylococcus</taxon>
    </lineage>
</organism>
<reference key="1">
    <citation type="journal article" date="2005" name="J. Bacteriol.">
        <title>Insights on evolution of virulence and resistance from the complete genome analysis of an early methicillin-resistant Staphylococcus aureus strain and a biofilm-producing methicillin-resistant Staphylococcus epidermidis strain.</title>
        <authorList>
            <person name="Gill S.R."/>
            <person name="Fouts D.E."/>
            <person name="Archer G.L."/>
            <person name="Mongodin E.F."/>
            <person name="DeBoy R.T."/>
            <person name="Ravel J."/>
            <person name="Paulsen I.T."/>
            <person name="Kolonay J.F."/>
            <person name="Brinkac L.M."/>
            <person name="Beanan M.J."/>
            <person name="Dodson R.J."/>
            <person name="Daugherty S.C."/>
            <person name="Madupu R."/>
            <person name="Angiuoli S.V."/>
            <person name="Durkin A.S."/>
            <person name="Haft D.H."/>
            <person name="Vamathevan J.J."/>
            <person name="Khouri H."/>
            <person name="Utterback T.R."/>
            <person name="Lee C."/>
            <person name="Dimitrov G."/>
            <person name="Jiang L."/>
            <person name="Qin H."/>
            <person name="Weidman J."/>
            <person name="Tran K."/>
            <person name="Kang K.H."/>
            <person name="Hance I.R."/>
            <person name="Nelson K.E."/>
            <person name="Fraser C.M."/>
        </authorList>
    </citation>
    <scope>NUCLEOTIDE SEQUENCE [LARGE SCALE GENOMIC DNA]</scope>
    <source>
        <strain>COL</strain>
    </source>
</reference>
<keyword id="KW-0378">Hydrolase</keyword>
<keyword id="KW-0645">Protease</keyword>
<keyword id="KW-0964">Secreted</keyword>
<keyword id="KW-0732">Signal</keyword>
<keyword id="KW-0788">Thiol protease</keyword>
<keyword id="KW-0843">Virulence</keyword>
<keyword id="KW-0865">Zymogen</keyword>
<comment type="function">
    <text evidence="2">Cysteine protease that plays an important role in the inhibition of host innate immune response. Degrades host elastin, fibrogen, fibronectin and kininogen. Blocks phagocytosis of opsonised S.aureus by neutrophils and monocytes by inducing their death in a proteolytic activity-dependent manner. Decreases surface expression of the 'don't eat me' signal CD31 on neutrophils. Cleaves host galectin-3/LGALS3, thereby inhibiting the neutrophil-activating ability of the lectin.</text>
</comment>
<comment type="activity regulation">
    <text evidence="1">Prematurely activated/folded staphopain B is inhibited by staphostatin B (SspC), which is probably required to protect staphylococcal cytoplasmic proteins from degradation by SspB.</text>
</comment>
<comment type="subunit">
    <text evidence="1">In the cytoplasm, prematurely activated/folded SspB forms a stable non-covalent complex with SspC.</text>
</comment>
<comment type="subcellular location">
    <subcellularLocation>
        <location evidence="1">Secreted</location>
    </subcellularLocation>
</comment>
<comment type="PTM">
    <text evidence="1">Proteolytically cleaved by staphylococcal serine protease (SspA).</text>
</comment>
<comment type="miscellaneous">
    <text evidence="1">The cascade of activation of extracellular proteases proceeds from the metalloprotease aureolysin (aur), through SspA to SspB.</text>
</comment>
<comment type="similarity">
    <text evidence="4">Belongs to the peptidase C47 family.</text>
</comment>
<protein>
    <recommendedName>
        <fullName>Staphopain B</fullName>
        <ecNumber>3.4.22.-</ecNumber>
    </recommendedName>
    <alternativeName>
        <fullName>Staphylococcal cysteine proteinase B</fullName>
    </alternativeName>
    <alternativeName>
        <fullName>Staphylopain B</fullName>
    </alternativeName>
</protein>